<evidence type="ECO:0000250" key="1">
    <source>
        <dbReference type="UniProtKB" id="P0A817"/>
    </source>
</evidence>
<evidence type="ECO:0000250" key="2">
    <source>
        <dbReference type="UniProtKB" id="P13444"/>
    </source>
</evidence>
<evidence type="ECO:0000250" key="3">
    <source>
        <dbReference type="UniProtKB" id="Q00266"/>
    </source>
</evidence>
<evidence type="ECO:0000269" key="4">
    <source>
    </source>
</evidence>
<evidence type="ECO:0000305" key="5"/>
<name>METK_LEIIN</name>
<sequence length="392" mass="43084">MSVHSILFSSEHVTEGHPDKLCDQVSDAVLDACLAGDPFSKVACESCAKTGMVMVFGEITTKAVLDYQKIVRNTIKDIGFDSADKGLDYESCNVLVAIEQQSPDICQGLGNFDSEDLGAGDQGMMFGYATDETETLMPLTYELARGLAKKYSELRRSGSLEWARPDAKTQVTVEYDYDTREGKQVLTPKRVAVVLISAQHDEHVTNDKISVDLMEKVIKAVIPANMLDAETKYWLNPSGRFVRGGPHGDAGLTGRKIIVDTYGGWGAHGGGAFSGKDPSKVDRSAAYAARWIAKSIVAGGLARRCLVQLAYAIGVAEPLSMHVETYGTGKYDDAKLLEIVKQNFKLRPYDIIQELNLRRPIYYDTSRFGHFGRKDELGTGGFTWEVPKKMVE</sequence>
<protein>
    <recommendedName>
        <fullName>S-adenosylmethionine synthase</fullName>
        <shortName>AdoMet synthase</shortName>
        <ecNumber evidence="4">2.5.1.6</ecNumber>
    </recommendedName>
    <alternativeName>
        <fullName>Methionine adenosyltransferase</fullName>
        <shortName>MAT</shortName>
    </alternativeName>
</protein>
<proteinExistence type="evidence at protein level"/>
<reference key="1">
    <citation type="journal article" date="2002" name="J. Biol. Chem.">
        <title>Cloning expression and characterization of methionine adenosyltransferase in Leishmania infantum promastigotes.</title>
        <authorList>
            <person name="Reguera R.M."/>
            <person name="Balana-Fouce R."/>
            <person name="Perez-Pertejo Y."/>
            <person name="Fernandez F.J."/>
            <person name="Garcia-Estrada C."/>
            <person name="Cubria J.C."/>
            <person name="Ordonez C."/>
            <person name="Ordonez D."/>
        </authorList>
    </citation>
    <scope>NUCLEOTIDE SEQUENCE [GENOMIC DNA]</scope>
    <scope>CATALYTIC ACTIVITY</scope>
    <scope>FUNCTION</scope>
    <scope>PATHWAY</scope>
    <scope>SUBUNIT</scope>
    <scope>DEVELOPMENTAL STAGE</scope>
    <source>
        <strain>MHOM/FR/78/LEM 75</strain>
    </source>
</reference>
<dbReference type="EC" id="2.5.1.6" evidence="4"/>
<dbReference type="EMBL" id="AF031902">
    <property type="protein sequence ID" value="AAB88448.2"/>
    <property type="molecule type" value="Genomic_DNA"/>
</dbReference>
<dbReference type="SMR" id="O43938"/>
<dbReference type="VEuPathDB" id="TriTrypDB:LINF_300041000"/>
<dbReference type="eggNOG" id="KOG1506">
    <property type="taxonomic scope" value="Eukaryota"/>
</dbReference>
<dbReference type="UniPathway" id="UPA00315">
    <property type="reaction ID" value="UER00080"/>
</dbReference>
<dbReference type="GO" id="GO:0005524">
    <property type="term" value="F:ATP binding"/>
    <property type="evidence" value="ECO:0007669"/>
    <property type="project" value="UniProtKB-KW"/>
</dbReference>
<dbReference type="GO" id="GO:0046872">
    <property type="term" value="F:metal ion binding"/>
    <property type="evidence" value="ECO:0007669"/>
    <property type="project" value="UniProtKB-KW"/>
</dbReference>
<dbReference type="GO" id="GO:0004478">
    <property type="term" value="F:methionine adenosyltransferase activity"/>
    <property type="evidence" value="ECO:0007669"/>
    <property type="project" value="UniProtKB-EC"/>
</dbReference>
<dbReference type="GO" id="GO:0006730">
    <property type="term" value="P:one-carbon metabolic process"/>
    <property type="evidence" value="ECO:0007669"/>
    <property type="project" value="UniProtKB-KW"/>
</dbReference>
<dbReference type="GO" id="GO:0006556">
    <property type="term" value="P:S-adenosylmethionine biosynthetic process"/>
    <property type="evidence" value="ECO:0007669"/>
    <property type="project" value="UniProtKB-UniPathway"/>
</dbReference>
<dbReference type="CDD" id="cd18079">
    <property type="entry name" value="S-AdoMet_synt"/>
    <property type="match status" value="1"/>
</dbReference>
<dbReference type="FunFam" id="3.30.300.10:FF:000001">
    <property type="entry name" value="S-adenosylmethionine synthase"/>
    <property type="match status" value="1"/>
</dbReference>
<dbReference type="FunFam" id="3.30.300.10:FF:000003">
    <property type="entry name" value="S-adenosylmethionine synthase"/>
    <property type="match status" value="1"/>
</dbReference>
<dbReference type="FunFam" id="3.30.300.10:FF:000004">
    <property type="entry name" value="S-adenosylmethionine synthase"/>
    <property type="match status" value="1"/>
</dbReference>
<dbReference type="Gene3D" id="3.30.300.10">
    <property type="match status" value="3"/>
</dbReference>
<dbReference type="HAMAP" id="MF_00086">
    <property type="entry name" value="S_AdoMet_synth1"/>
    <property type="match status" value="1"/>
</dbReference>
<dbReference type="InterPro" id="IPR022631">
    <property type="entry name" value="ADOMET_SYNTHASE_CS"/>
</dbReference>
<dbReference type="InterPro" id="IPR022630">
    <property type="entry name" value="S-AdoMet_synt_C"/>
</dbReference>
<dbReference type="InterPro" id="IPR022629">
    <property type="entry name" value="S-AdoMet_synt_central"/>
</dbReference>
<dbReference type="InterPro" id="IPR022628">
    <property type="entry name" value="S-AdoMet_synt_N"/>
</dbReference>
<dbReference type="InterPro" id="IPR002133">
    <property type="entry name" value="S-AdoMet_synthetase"/>
</dbReference>
<dbReference type="InterPro" id="IPR022636">
    <property type="entry name" value="S-AdoMet_synthetase_sfam"/>
</dbReference>
<dbReference type="NCBIfam" id="TIGR01034">
    <property type="entry name" value="metK"/>
    <property type="match status" value="1"/>
</dbReference>
<dbReference type="PANTHER" id="PTHR11964">
    <property type="entry name" value="S-ADENOSYLMETHIONINE SYNTHETASE"/>
    <property type="match status" value="1"/>
</dbReference>
<dbReference type="Pfam" id="PF02773">
    <property type="entry name" value="S-AdoMet_synt_C"/>
    <property type="match status" value="1"/>
</dbReference>
<dbReference type="Pfam" id="PF02772">
    <property type="entry name" value="S-AdoMet_synt_M"/>
    <property type="match status" value="1"/>
</dbReference>
<dbReference type="Pfam" id="PF00438">
    <property type="entry name" value="S-AdoMet_synt_N"/>
    <property type="match status" value="1"/>
</dbReference>
<dbReference type="PIRSF" id="PIRSF000497">
    <property type="entry name" value="MAT"/>
    <property type="match status" value="1"/>
</dbReference>
<dbReference type="SUPFAM" id="SSF55973">
    <property type="entry name" value="S-adenosylmethionine synthetase"/>
    <property type="match status" value="3"/>
</dbReference>
<dbReference type="PROSITE" id="PS00376">
    <property type="entry name" value="ADOMET_SYNTHASE_1"/>
    <property type="match status" value="1"/>
</dbReference>
<dbReference type="PROSITE" id="PS00377">
    <property type="entry name" value="ADOMET_SYNTHASE_2"/>
    <property type="match status" value="1"/>
</dbReference>
<feature type="chain" id="PRO_0000174447" description="S-adenosylmethionine synthase">
    <location>
        <begin position="1"/>
        <end position="392"/>
    </location>
</feature>
<feature type="binding site" evidence="2">
    <location>
        <position position="11"/>
    </location>
    <ligand>
        <name>Mg(2+)</name>
        <dbReference type="ChEBI" id="CHEBI:18420"/>
    </ligand>
</feature>
<feature type="binding site" description="in other chain" evidence="3">
    <location>
        <position position="17"/>
    </location>
    <ligand>
        <name>ATP</name>
        <dbReference type="ChEBI" id="CHEBI:30616"/>
        <note>ligand shared between two neighboring subunits</note>
    </ligand>
</feature>
<feature type="binding site" evidence="1">
    <location>
        <position position="45"/>
    </location>
    <ligand>
        <name>K(+)</name>
        <dbReference type="ChEBI" id="CHEBI:29103"/>
    </ligand>
</feature>
<feature type="binding site" description="in other chain" evidence="1">
    <location>
        <position position="58"/>
    </location>
    <ligand>
        <name>L-methionine</name>
        <dbReference type="ChEBI" id="CHEBI:57844"/>
        <note>ligand shared between two neighboring subunits</note>
    </ligand>
</feature>
<feature type="binding site" description="in other chain" evidence="1">
    <location>
        <position position="101"/>
    </location>
    <ligand>
        <name>L-methionine</name>
        <dbReference type="ChEBI" id="CHEBI:57844"/>
        <note>ligand shared between two neighboring subunits</note>
    </ligand>
</feature>
<feature type="binding site" description="in other chain" evidence="3">
    <location>
        <begin position="166"/>
        <end position="168"/>
    </location>
    <ligand>
        <name>ATP</name>
        <dbReference type="ChEBI" id="CHEBI:30616"/>
        <note>ligand shared between two neighboring subunits</note>
    </ligand>
</feature>
<feature type="binding site" description="in other chain" evidence="3">
    <location>
        <begin position="238"/>
        <end position="241"/>
    </location>
    <ligand>
        <name>ATP</name>
        <dbReference type="ChEBI" id="CHEBI:30616"/>
        <note>ligand shared between two neighboring subunits</note>
    </ligand>
</feature>
<feature type="binding site" description="in other chain" evidence="3">
    <location>
        <position position="249"/>
    </location>
    <ligand>
        <name>ATP</name>
        <dbReference type="ChEBI" id="CHEBI:30616"/>
        <note>ligand shared between two neighboring subunits</note>
    </ligand>
</feature>
<feature type="binding site" evidence="1">
    <location>
        <position position="249"/>
    </location>
    <ligand>
        <name>L-methionine</name>
        <dbReference type="ChEBI" id="CHEBI:57844"/>
        <note>ligand shared between two neighboring subunits</note>
    </ligand>
</feature>
<feature type="binding site" description="in other chain" evidence="1">
    <location>
        <begin position="255"/>
        <end position="256"/>
    </location>
    <ligand>
        <name>ATP</name>
        <dbReference type="ChEBI" id="CHEBI:30616"/>
        <note>ligand shared between two neighboring subunits</note>
    </ligand>
</feature>
<feature type="binding site" evidence="1">
    <location>
        <position position="272"/>
    </location>
    <ligand>
        <name>ATP</name>
        <dbReference type="ChEBI" id="CHEBI:30616"/>
        <note>ligand shared between two neighboring subunits</note>
    </ligand>
</feature>
<feature type="binding site" evidence="1">
    <location>
        <position position="276"/>
    </location>
    <ligand>
        <name>ATP</name>
        <dbReference type="ChEBI" id="CHEBI:30616"/>
        <note>ligand shared between two neighboring subunits</note>
    </ligand>
</feature>
<feature type="binding site" evidence="2">
    <location>
        <position position="280"/>
    </location>
    <ligand>
        <name>ATP</name>
        <dbReference type="ChEBI" id="CHEBI:30616"/>
        <note>ligand shared between two neighboring subunits</note>
    </ligand>
</feature>
<feature type="binding site" description="in other chain" evidence="1">
    <location>
        <position position="280"/>
    </location>
    <ligand>
        <name>L-methionine</name>
        <dbReference type="ChEBI" id="CHEBI:57844"/>
        <note>ligand shared between two neighboring subunits</note>
    </ligand>
</feature>
<accession>O43938</accession>
<organism>
    <name type="scientific">Leishmania infantum</name>
    <dbReference type="NCBI Taxonomy" id="5671"/>
    <lineage>
        <taxon>Eukaryota</taxon>
        <taxon>Discoba</taxon>
        <taxon>Euglenozoa</taxon>
        <taxon>Kinetoplastea</taxon>
        <taxon>Metakinetoplastina</taxon>
        <taxon>Trypanosomatida</taxon>
        <taxon>Trypanosomatidae</taxon>
        <taxon>Leishmaniinae</taxon>
        <taxon>Leishmania</taxon>
    </lineage>
</organism>
<keyword id="KW-0067">ATP-binding</keyword>
<keyword id="KW-0460">Magnesium</keyword>
<keyword id="KW-0479">Metal-binding</keyword>
<keyword id="KW-0547">Nucleotide-binding</keyword>
<keyword id="KW-0554">One-carbon metabolism</keyword>
<keyword id="KW-0630">Potassium</keyword>
<keyword id="KW-0808">Transferase</keyword>
<gene>
    <name type="primary">METK</name>
    <name type="synonym">MAT2</name>
</gene>
<comment type="function">
    <text evidence="4">Catalyzes the formation of S-adenosylmethionine from methionine and ATP. The reaction comprises two steps that are both catalyzed by the same enzyme: formation of S-adenosylmethionine (AdoMet) and triphosphate, and subsequent hydrolysis of the triphosphate.</text>
</comment>
<comment type="catalytic activity">
    <reaction evidence="4">
        <text>L-methionine + ATP + H2O = S-adenosyl-L-methionine + phosphate + diphosphate</text>
        <dbReference type="Rhea" id="RHEA:21080"/>
        <dbReference type="ChEBI" id="CHEBI:15377"/>
        <dbReference type="ChEBI" id="CHEBI:30616"/>
        <dbReference type="ChEBI" id="CHEBI:33019"/>
        <dbReference type="ChEBI" id="CHEBI:43474"/>
        <dbReference type="ChEBI" id="CHEBI:57844"/>
        <dbReference type="ChEBI" id="CHEBI:59789"/>
        <dbReference type="EC" id="2.5.1.6"/>
    </reaction>
</comment>
<comment type="cofactor">
    <cofactor evidence="2">
        <name>Mg(2+)</name>
        <dbReference type="ChEBI" id="CHEBI:18420"/>
    </cofactor>
    <text evidence="2">Binds 2 magnesium ions per subunit. The magnesium ions interact primarily with the substrate.</text>
</comment>
<comment type="cofactor">
    <cofactor evidence="2">
        <name>K(+)</name>
        <dbReference type="ChEBI" id="CHEBI:29103"/>
    </cofactor>
    <text evidence="2">Binds 1 potassium ion per subunit. The potassium ion interacts primarily with the substrate.</text>
</comment>
<comment type="pathway">
    <text evidence="4">Amino-acid biosynthesis; S-adenosyl-L-methionine biosynthesis; S-adenosyl-L-methionine from L-methionine: step 1/1.</text>
</comment>
<comment type="subunit">
    <text evidence="4">Homodimer.</text>
</comment>
<comment type="developmental stage">
    <text evidence="4">Highly expressed in the insect stage (Promastigote).</text>
</comment>
<comment type="similarity">
    <text evidence="5">Belongs to the AdoMet synthase family.</text>
</comment>